<evidence type="ECO:0000250" key="1">
    <source>
        <dbReference type="UniProtKB" id="L0E2Z4"/>
    </source>
</evidence>
<evidence type="ECO:0000269" key="2">
    <source>
    </source>
</evidence>
<evidence type="ECO:0000269" key="3">
    <source>
    </source>
</evidence>
<evidence type="ECO:0000303" key="4">
    <source>
    </source>
</evidence>
<evidence type="ECO:0000305" key="5"/>
<evidence type="ECO:0000305" key="6">
    <source>
    </source>
</evidence>
<evidence type="ECO:0007744" key="7">
    <source>
        <dbReference type="PDB" id="1H5Q"/>
    </source>
</evidence>
<evidence type="ECO:0007829" key="8">
    <source>
        <dbReference type="PDB" id="1H5Q"/>
    </source>
</evidence>
<name>NMTDH_AGABI</name>
<organism>
    <name type="scientific">Agaricus bisporus</name>
    <name type="common">White button mushroom</name>
    <dbReference type="NCBI Taxonomy" id="5341"/>
    <lineage>
        <taxon>Eukaryota</taxon>
        <taxon>Fungi</taxon>
        <taxon>Dikarya</taxon>
        <taxon>Basidiomycota</taxon>
        <taxon>Agaricomycotina</taxon>
        <taxon>Agaricomycetes</taxon>
        <taxon>Agaricomycetidae</taxon>
        <taxon>Agaricales</taxon>
        <taxon>Agaricineae</taxon>
        <taxon>Agaricaceae</taxon>
        <taxon>Agaricus</taxon>
    </lineage>
</organism>
<reference key="1">
    <citation type="journal article" date="1998" name="Appl. Environ. Microbiol.">
        <title>Cloning and characterization of NADP-mannitol dehydrogenase cDNA from the button mushroom, Agaricus bisporus, and its expression in response to NaCl stress.</title>
        <authorList>
            <person name="Stoop J.M.H."/>
            <person name="Mooibroek H."/>
        </authorList>
    </citation>
    <scope>NUCLEOTIDE SEQUENCE [MRNA]</scope>
    <scope>PROTEIN SEQUENCE OF 2-20 AND 211-230</scope>
    <scope>CHARACTERIZATION</scope>
    <source>
        <strain>Horst U1</strain>
    </source>
</reference>
<reference key="2">
    <citation type="journal article" date="2001" name="Acta Crystallogr. D">
        <title>Crystallization and preliminary crystallographic analysis of mannitol dehydrogenase (MtDH) from the common mushroom Agaricus bisporus.</title>
        <authorList>
            <person name="Sassoon J."/>
            <person name="Hoerer S."/>
            <person name="Stoop J."/>
            <person name="Mooibroek H."/>
            <person name="Baumann U."/>
        </authorList>
    </citation>
    <scope>CRYSTALLIZATION</scope>
</reference>
<reference key="3">
    <citation type="journal article" date="2001" name="J. Biol. Chem.">
        <title>The crystallographic structure of the mannitol 2-dehydrogenase NADP+ binary complex from Agaricus bisporus.</title>
        <authorList>
            <person name="Horer S."/>
            <person name="Stoop J."/>
            <person name="Mooibroek H."/>
            <person name="Baumann U."/>
            <person name="Sassoon J."/>
        </authorList>
    </citation>
    <scope>X-RAY CRYSTALLOGRAPHY (1.5 ANGSTROMS) IN COMPLEX WITH NADP</scope>
    <scope>CATALYTIC ACTIVITY</scope>
    <scope>BIOPHYSICOCHEMICAL PROPERTIES</scope>
    <scope>SUBUNIT</scope>
    <scope>REACTION MECHANISM</scope>
</reference>
<dbReference type="EC" id="1.1.1.138" evidence="2"/>
<dbReference type="EMBL" id="AF053764">
    <property type="protein sequence ID" value="AAC79985.1"/>
    <property type="molecule type" value="mRNA"/>
</dbReference>
<dbReference type="PDB" id="1H5Q">
    <property type="method" value="X-ray"/>
    <property type="resolution" value="1.50 A"/>
    <property type="chains" value="A/B/C/D/E/F/G/H/I/J/K/L=2-262"/>
</dbReference>
<dbReference type="PDBsum" id="1H5Q"/>
<dbReference type="SMR" id="O93868"/>
<dbReference type="EvolutionaryTrace" id="O93868"/>
<dbReference type="GO" id="GO:0050085">
    <property type="term" value="F:mannitol 2-dehydrogenase (NADP+) activity"/>
    <property type="evidence" value="ECO:0000314"/>
    <property type="project" value="UniProtKB"/>
</dbReference>
<dbReference type="GO" id="GO:0050661">
    <property type="term" value="F:NADP binding"/>
    <property type="evidence" value="ECO:0000314"/>
    <property type="project" value="UniProtKB"/>
</dbReference>
<dbReference type="GO" id="GO:0050664">
    <property type="term" value="F:oxidoreductase activity, acting on NAD(P)H, oxygen as acceptor"/>
    <property type="evidence" value="ECO:0007669"/>
    <property type="project" value="TreeGrafter"/>
</dbReference>
<dbReference type="GO" id="GO:0019594">
    <property type="term" value="P:mannitol metabolic process"/>
    <property type="evidence" value="ECO:0000314"/>
    <property type="project" value="UniProtKB"/>
</dbReference>
<dbReference type="GO" id="GO:0051289">
    <property type="term" value="P:protein homotetramerization"/>
    <property type="evidence" value="ECO:0000314"/>
    <property type="project" value="UniProtKB"/>
</dbReference>
<dbReference type="CDD" id="cd05352">
    <property type="entry name" value="MDH-like_SDR_c"/>
    <property type="match status" value="1"/>
</dbReference>
<dbReference type="FunFam" id="3.40.50.720:FF:000084">
    <property type="entry name" value="Short-chain dehydrogenase reductase"/>
    <property type="match status" value="1"/>
</dbReference>
<dbReference type="Gene3D" id="3.40.50.720">
    <property type="entry name" value="NAD(P)-binding Rossmann-like Domain"/>
    <property type="match status" value="1"/>
</dbReference>
<dbReference type="InterPro" id="IPR036291">
    <property type="entry name" value="NAD(P)-bd_dom_sf"/>
</dbReference>
<dbReference type="InterPro" id="IPR002347">
    <property type="entry name" value="SDR_fam"/>
</dbReference>
<dbReference type="PANTHER" id="PTHR43008">
    <property type="entry name" value="BENZIL REDUCTASE"/>
    <property type="match status" value="1"/>
</dbReference>
<dbReference type="PANTHER" id="PTHR43008:SF6">
    <property type="entry name" value="NADP-DEPENDENT MANNITOL DEHYDROGENASE"/>
    <property type="match status" value="1"/>
</dbReference>
<dbReference type="Pfam" id="PF13561">
    <property type="entry name" value="adh_short_C2"/>
    <property type="match status" value="1"/>
</dbReference>
<dbReference type="PRINTS" id="PR00081">
    <property type="entry name" value="GDHRDH"/>
</dbReference>
<dbReference type="PRINTS" id="PR00080">
    <property type="entry name" value="SDRFAMILY"/>
</dbReference>
<dbReference type="SUPFAM" id="SSF51735">
    <property type="entry name" value="NAD(P)-binding Rossmann-fold domains"/>
    <property type="match status" value="1"/>
</dbReference>
<keyword id="KW-0002">3D-structure</keyword>
<keyword id="KW-0903">Direct protein sequencing</keyword>
<keyword id="KW-0521">NADP</keyword>
<keyword id="KW-0560">Oxidoreductase</keyword>
<feature type="initiator methionine" description="Removed" evidence="3">
    <location>
        <position position="1"/>
    </location>
</feature>
<feature type="chain" id="PRO_0000054726" description="NADP-dependent mannitol dehydrogenase">
    <location>
        <begin position="2"/>
        <end position="262"/>
    </location>
</feature>
<feature type="active site" description="Proton donor" evidence="6">
    <location>
        <position position="149"/>
    </location>
</feature>
<feature type="active site" description="Proton acceptor" evidence="6">
    <location>
        <position position="169"/>
    </location>
</feature>
<feature type="active site" description="Lowers pKa of active site Tyr" evidence="6">
    <location>
        <position position="173"/>
    </location>
</feature>
<feature type="binding site" evidence="1">
    <location>
        <position position="23"/>
    </location>
    <ligand>
        <name>NADP(+)</name>
        <dbReference type="ChEBI" id="CHEBI:58349"/>
    </ligand>
</feature>
<feature type="binding site" evidence="1">
    <location>
        <position position="69"/>
    </location>
    <ligand>
        <name>NADP(+)</name>
        <dbReference type="ChEBI" id="CHEBI:58349"/>
    </ligand>
</feature>
<feature type="binding site" evidence="2 7">
    <location>
        <position position="96"/>
    </location>
    <ligand>
        <name>NADP(+)</name>
        <dbReference type="ChEBI" id="CHEBI:58349"/>
    </ligand>
</feature>
<feature type="binding site" evidence="1">
    <location>
        <position position="129"/>
    </location>
    <ligand>
        <name>NADP(+)</name>
        <dbReference type="ChEBI" id="CHEBI:58349"/>
    </ligand>
</feature>
<feature type="binding site" evidence="2 7">
    <location>
        <position position="169"/>
    </location>
    <ligand>
        <name>NADP(+)</name>
        <dbReference type="ChEBI" id="CHEBI:58349"/>
    </ligand>
</feature>
<feature type="binding site" evidence="2 7">
    <location>
        <position position="173"/>
    </location>
    <ligand>
        <name>NADP(+)</name>
        <dbReference type="ChEBI" id="CHEBI:58349"/>
    </ligand>
</feature>
<feature type="binding site" evidence="2 7">
    <location>
        <position position="202"/>
    </location>
    <ligand>
        <name>NADP(+)</name>
        <dbReference type="ChEBI" id="CHEBI:58349"/>
    </ligand>
</feature>
<feature type="binding site" evidence="1">
    <location>
        <position position="204"/>
    </location>
    <ligand>
        <name>NADP(+)</name>
        <dbReference type="ChEBI" id="CHEBI:58349"/>
    </ligand>
</feature>
<feature type="binding site" evidence="2 7">
    <location>
        <position position="206"/>
    </location>
    <ligand>
        <name>NADP(+)</name>
        <dbReference type="ChEBI" id="CHEBI:58349"/>
    </ligand>
</feature>
<feature type="strand" evidence="8">
    <location>
        <begin position="5"/>
        <end position="7"/>
    </location>
</feature>
<feature type="strand" evidence="8">
    <location>
        <begin position="12"/>
        <end position="17"/>
    </location>
</feature>
<feature type="turn" evidence="8">
    <location>
        <begin position="18"/>
        <end position="20"/>
    </location>
</feature>
<feature type="helix" evidence="8">
    <location>
        <begin position="22"/>
        <end position="33"/>
    </location>
</feature>
<feature type="strand" evidence="8">
    <location>
        <begin position="36"/>
        <end position="44"/>
    </location>
</feature>
<feature type="helix" evidence="8">
    <location>
        <begin position="48"/>
        <end position="59"/>
    </location>
</feature>
<feature type="strand" evidence="8">
    <location>
        <begin position="63"/>
        <end position="67"/>
    </location>
</feature>
<feature type="helix" evidence="8">
    <location>
        <begin position="73"/>
        <end position="86"/>
    </location>
</feature>
<feature type="strand" evidence="8">
    <location>
        <begin position="89"/>
        <end position="95"/>
    </location>
</feature>
<feature type="helix" evidence="8">
    <location>
        <begin position="105"/>
        <end position="107"/>
    </location>
</feature>
<feature type="helix" evidence="8">
    <location>
        <begin position="110"/>
        <end position="120"/>
    </location>
</feature>
<feature type="helix" evidence="8">
    <location>
        <begin position="122"/>
        <end position="138"/>
    </location>
</feature>
<feature type="strand" evidence="8">
    <location>
        <begin position="142"/>
        <end position="147"/>
    </location>
</feature>
<feature type="helix" evidence="8">
    <location>
        <begin position="150"/>
        <end position="152"/>
    </location>
</feature>
<feature type="strand" evidence="8">
    <location>
        <begin position="157"/>
        <end position="159"/>
    </location>
</feature>
<feature type="helix" evidence="8">
    <location>
        <begin position="167"/>
        <end position="187"/>
    </location>
</feature>
<feature type="helix" evidence="8">
    <location>
        <begin position="188"/>
        <end position="190"/>
    </location>
</feature>
<feature type="strand" evidence="8">
    <location>
        <begin position="192"/>
        <end position="199"/>
    </location>
</feature>
<feature type="helix" evidence="8">
    <location>
        <begin position="205"/>
        <end position="209"/>
    </location>
</feature>
<feature type="helix" evidence="8">
    <location>
        <begin position="212"/>
        <end position="220"/>
    </location>
</feature>
<feature type="helix" evidence="8">
    <location>
        <begin position="230"/>
        <end position="233"/>
    </location>
</feature>
<feature type="helix" evidence="8">
    <location>
        <begin position="234"/>
        <end position="241"/>
    </location>
</feature>
<feature type="helix" evidence="8">
    <location>
        <begin position="243"/>
        <end position="245"/>
    </location>
</feature>
<feature type="strand" evidence="8">
    <location>
        <begin position="252"/>
        <end position="255"/>
    </location>
</feature>
<feature type="helix" evidence="8">
    <location>
        <begin position="259"/>
        <end position="261"/>
    </location>
</feature>
<accession>O93868</accession>
<comment type="catalytic activity">
    <reaction evidence="2">
        <text>D-mannitol + NADP(+) = D-fructose + NADPH + H(+)</text>
        <dbReference type="Rhea" id="RHEA:16765"/>
        <dbReference type="ChEBI" id="CHEBI:15378"/>
        <dbReference type="ChEBI" id="CHEBI:16899"/>
        <dbReference type="ChEBI" id="CHEBI:37721"/>
        <dbReference type="ChEBI" id="CHEBI:57783"/>
        <dbReference type="ChEBI" id="CHEBI:58349"/>
        <dbReference type="EC" id="1.1.1.138"/>
    </reaction>
</comment>
<comment type="biophysicochemical properties">
    <kinetics>
        <KM evidence="2">29.3 mM for mannitol (at pH 9.0 and 30 degrees Celsius)</KM>
        <KM evidence="2">58.7 mM for fructose (at pH 9.0 and at 30 degrees Celsius)</KM>
        <text evidence="2">kcat is 2.20 sec(-1) for mannitol. kcat is 7.31 sec(-1) for fructose.</text>
    </kinetics>
</comment>
<comment type="subunit">
    <text evidence="2">Homotetramer.</text>
</comment>
<comment type="similarity">
    <text evidence="5">Belongs to the short-chain dehydrogenases/reductases (SDR) family.</text>
</comment>
<sequence length="262" mass="28019">MAPGFTISFVNKTIIVTGGNRGIGLAFTRAVAAAGANVAVIYRSAKDAVEVTEKVGKEFGVKTKAYQCDVSNTDIVTKTIQQIDADLGAISGLIANAGVSVVKPATELTHEDFKFVYDVNVFGVFNTCRAVAKLWLQKQQKGSIVVTSSMSSQIINQSSLNGSLTQVFYNSSKAACSNLVKGLAAEWASAGIRVNALSPGYVNTDQTAHMDKKIRDHQASNIPLNRFAQPEEMTGQAILLLSDHATYMTGGEYFIDGGQLIW</sequence>
<gene>
    <name type="primary">mtdH</name>
</gene>
<protein>
    <recommendedName>
        <fullName>NADP-dependent mannitol dehydrogenase</fullName>
        <shortName evidence="4">MtDH</shortName>
        <ecNumber evidence="2">1.1.1.138</ecNumber>
    </recommendedName>
    <alternativeName>
        <fullName evidence="4">Mannitol 2-dehydrogenase [NADP(+)]</fullName>
    </alternativeName>
</protein>
<proteinExistence type="evidence at protein level"/>